<organism>
    <name type="scientific">Corynebacterium urealyticum (strain ATCC 43042 / DSM 7109)</name>
    <dbReference type="NCBI Taxonomy" id="504474"/>
    <lineage>
        <taxon>Bacteria</taxon>
        <taxon>Bacillati</taxon>
        <taxon>Actinomycetota</taxon>
        <taxon>Actinomycetes</taxon>
        <taxon>Mycobacteriales</taxon>
        <taxon>Corynebacteriaceae</taxon>
        <taxon>Corynebacterium</taxon>
    </lineage>
</organism>
<proteinExistence type="inferred from homology"/>
<dbReference type="EMBL" id="AM942444">
    <property type="protein sequence ID" value="CAQ04318.1"/>
    <property type="molecule type" value="Genomic_DNA"/>
</dbReference>
<dbReference type="RefSeq" id="WP_012359611.1">
    <property type="nucleotide sequence ID" value="NC_010545.1"/>
</dbReference>
<dbReference type="SMR" id="B1VEX9"/>
<dbReference type="STRING" id="504474.cu0358"/>
<dbReference type="GeneID" id="60605161"/>
<dbReference type="KEGG" id="cur:cu0358"/>
<dbReference type="eggNOG" id="COG0099">
    <property type="taxonomic scope" value="Bacteria"/>
</dbReference>
<dbReference type="HOGENOM" id="CLU_103849_1_2_11"/>
<dbReference type="Proteomes" id="UP000001727">
    <property type="component" value="Chromosome"/>
</dbReference>
<dbReference type="GO" id="GO:0005829">
    <property type="term" value="C:cytosol"/>
    <property type="evidence" value="ECO:0007669"/>
    <property type="project" value="TreeGrafter"/>
</dbReference>
<dbReference type="GO" id="GO:0015935">
    <property type="term" value="C:small ribosomal subunit"/>
    <property type="evidence" value="ECO:0007669"/>
    <property type="project" value="TreeGrafter"/>
</dbReference>
<dbReference type="GO" id="GO:0019843">
    <property type="term" value="F:rRNA binding"/>
    <property type="evidence" value="ECO:0007669"/>
    <property type="project" value="UniProtKB-UniRule"/>
</dbReference>
<dbReference type="GO" id="GO:0003735">
    <property type="term" value="F:structural constituent of ribosome"/>
    <property type="evidence" value="ECO:0007669"/>
    <property type="project" value="InterPro"/>
</dbReference>
<dbReference type="GO" id="GO:0000049">
    <property type="term" value="F:tRNA binding"/>
    <property type="evidence" value="ECO:0007669"/>
    <property type="project" value="UniProtKB-UniRule"/>
</dbReference>
<dbReference type="GO" id="GO:0006412">
    <property type="term" value="P:translation"/>
    <property type="evidence" value="ECO:0007669"/>
    <property type="project" value="UniProtKB-UniRule"/>
</dbReference>
<dbReference type="FunFam" id="1.10.8.50:FF:000001">
    <property type="entry name" value="30S ribosomal protein S13"/>
    <property type="match status" value="1"/>
</dbReference>
<dbReference type="FunFam" id="4.10.910.10:FF:000001">
    <property type="entry name" value="30S ribosomal protein S13"/>
    <property type="match status" value="1"/>
</dbReference>
<dbReference type="Gene3D" id="1.10.8.50">
    <property type="match status" value="1"/>
</dbReference>
<dbReference type="Gene3D" id="4.10.910.10">
    <property type="entry name" value="30s ribosomal protein s13, domain 2"/>
    <property type="match status" value="1"/>
</dbReference>
<dbReference type="HAMAP" id="MF_01315">
    <property type="entry name" value="Ribosomal_uS13"/>
    <property type="match status" value="1"/>
</dbReference>
<dbReference type="InterPro" id="IPR027437">
    <property type="entry name" value="Rbsml_uS13_C"/>
</dbReference>
<dbReference type="InterPro" id="IPR001892">
    <property type="entry name" value="Ribosomal_uS13"/>
</dbReference>
<dbReference type="InterPro" id="IPR010979">
    <property type="entry name" value="Ribosomal_uS13-like_H2TH"/>
</dbReference>
<dbReference type="InterPro" id="IPR019980">
    <property type="entry name" value="Ribosomal_uS13_bac-type"/>
</dbReference>
<dbReference type="InterPro" id="IPR018269">
    <property type="entry name" value="Ribosomal_uS13_CS"/>
</dbReference>
<dbReference type="NCBIfam" id="TIGR03631">
    <property type="entry name" value="uS13_bact"/>
    <property type="match status" value="1"/>
</dbReference>
<dbReference type="PANTHER" id="PTHR10871">
    <property type="entry name" value="30S RIBOSOMAL PROTEIN S13/40S RIBOSOMAL PROTEIN S18"/>
    <property type="match status" value="1"/>
</dbReference>
<dbReference type="PANTHER" id="PTHR10871:SF1">
    <property type="entry name" value="SMALL RIBOSOMAL SUBUNIT PROTEIN US13M"/>
    <property type="match status" value="1"/>
</dbReference>
<dbReference type="Pfam" id="PF00416">
    <property type="entry name" value="Ribosomal_S13"/>
    <property type="match status" value="1"/>
</dbReference>
<dbReference type="PIRSF" id="PIRSF002134">
    <property type="entry name" value="Ribosomal_S13"/>
    <property type="match status" value="1"/>
</dbReference>
<dbReference type="SUPFAM" id="SSF46946">
    <property type="entry name" value="S13-like H2TH domain"/>
    <property type="match status" value="1"/>
</dbReference>
<dbReference type="PROSITE" id="PS00646">
    <property type="entry name" value="RIBOSOMAL_S13_1"/>
    <property type="match status" value="1"/>
</dbReference>
<dbReference type="PROSITE" id="PS50159">
    <property type="entry name" value="RIBOSOMAL_S13_2"/>
    <property type="match status" value="1"/>
</dbReference>
<name>RS13_CORU7</name>
<feature type="chain" id="PRO_1000141247" description="Small ribosomal subunit protein uS13">
    <location>
        <begin position="1"/>
        <end position="122"/>
    </location>
</feature>
<feature type="region of interest" description="Disordered" evidence="2">
    <location>
        <begin position="93"/>
        <end position="122"/>
    </location>
</feature>
<comment type="function">
    <text evidence="1">Located at the top of the head of the 30S subunit, it contacts several helices of the 16S rRNA. In the 70S ribosome it contacts the 23S rRNA (bridge B1a) and protein L5 of the 50S subunit (bridge B1b), connecting the 2 subunits; these bridges are implicated in subunit movement. Contacts the tRNAs in the A and P-sites.</text>
</comment>
<comment type="subunit">
    <text evidence="1">Part of the 30S ribosomal subunit. Forms a loose heterodimer with protein S19. Forms two bridges to the 50S subunit in the 70S ribosome.</text>
</comment>
<comment type="similarity">
    <text evidence="1">Belongs to the universal ribosomal protein uS13 family.</text>
</comment>
<gene>
    <name evidence="1" type="primary">rpsM</name>
    <name type="ordered locus">cu0358</name>
</gene>
<sequence>MARLAGVDLPREKRMEVALTYIFGIGPARSKELLEKTGISPDLRSKDLSDEQLAALRDVIENNWKVEGDLRREIQADIRRKIEIGSYQGLRHRRGLPVRGQRTKTNARTRKGPKKTIAGKKK</sequence>
<keyword id="KW-1185">Reference proteome</keyword>
<keyword id="KW-0687">Ribonucleoprotein</keyword>
<keyword id="KW-0689">Ribosomal protein</keyword>
<keyword id="KW-0694">RNA-binding</keyword>
<keyword id="KW-0699">rRNA-binding</keyword>
<keyword id="KW-0820">tRNA-binding</keyword>
<protein>
    <recommendedName>
        <fullName evidence="1">Small ribosomal subunit protein uS13</fullName>
    </recommendedName>
    <alternativeName>
        <fullName evidence="3">30S ribosomal protein S13</fullName>
    </alternativeName>
</protein>
<reference key="1">
    <citation type="journal article" date="2008" name="J. Biotechnol.">
        <title>The lifestyle of Corynebacterium urealyticum derived from its complete genome sequence established by pyrosequencing.</title>
        <authorList>
            <person name="Tauch A."/>
            <person name="Trost E."/>
            <person name="Tilker A."/>
            <person name="Ludewig U."/>
            <person name="Schneiker S."/>
            <person name="Goesmann A."/>
            <person name="Arnold W."/>
            <person name="Bekel T."/>
            <person name="Brinkrolf K."/>
            <person name="Brune I."/>
            <person name="Goetker S."/>
            <person name="Kalinowski J."/>
            <person name="Kamp P.-B."/>
            <person name="Lobo F.P."/>
            <person name="Viehoever P."/>
            <person name="Weisshaar B."/>
            <person name="Soriano F."/>
            <person name="Droege M."/>
            <person name="Puehler A."/>
        </authorList>
    </citation>
    <scope>NUCLEOTIDE SEQUENCE [LARGE SCALE GENOMIC DNA]</scope>
    <source>
        <strain>ATCC 43042 / DSM 7109</strain>
    </source>
</reference>
<evidence type="ECO:0000255" key="1">
    <source>
        <dbReference type="HAMAP-Rule" id="MF_01315"/>
    </source>
</evidence>
<evidence type="ECO:0000256" key="2">
    <source>
        <dbReference type="SAM" id="MobiDB-lite"/>
    </source>
</evidence>
<evidence type="ECO:0000305" key="3"/>
<accession>B1VEX9</accession>